<feature type="chain" id="PRO_1000137598" description="Protein GrpE">
    <location>
        <begin position="1"/>
        <end position="203"/>
    </location>
</feature>
<feature type="region of interest" description="Disordered" evidence="2">
    <location>
        <begin position="1"/>
        <end position="38"/>
    </location>
</feature>
<feature type="compositionally biased region" description="Basic and acidic residues" evidence="2">
    <location>
        <begin position="1"/>
        <end position="20"/>
    </location>
</feature>
<protein>
    <recommendedName>
        <fullName evidence="1">Protein GrpE</fullName>
    </recommendedName>
    <alternativeName>
        <fullName evidence="1">HSP-70 cofactor</fullName>
    </alternativeName>
</protein>
<organism>
    <name type="scientific">Proteus mirabilis (strain HI4320)</name>
    <dbReference type="NCBI Taxonomy" id="529507"/>
    <lineage>
        <taxon>Bacteria</taxon>
        <taxon>Pseudomonadati</taxon>
        <taxon>Pseudomonadota</taxon>
        <taxon>Gammaproteobacteria</taxon>
        <taxon>Enterobacterales</taxon>
        <taxon>Morganellaceae</taxon>
        <taxon>Proteus</taxon>
    </lineage>
</organism>
<proteinExistence type="inferred from homology"/>
<comment type="function">
    <text evidence="1">Participates actively in the response to hyperosmotic and heat shock by preventing the aggregation of stress-denatured proteins, in association with DnaK and GrpE. It is the nucleotide exchange factor for DnaK and may function as a thermosensor. Unfolded proteins bind initially to DnaJ; upon interaction with the DnaJ-bound protein, DnaK hydrolyzes its bound ATP, resulting in the formation of a stable complex. GrpE releases ADP from DnaK; ATP binding to DnaK triggers the release of the substrate protein, thus completing the reaction cycle. Several rounds of ATP-dependent interactions between DnaJ, DnaK and GrpE are required for fully efficient folding.</text>
</comment>
<comment type="subunit">
    <text evidence="1">Homodimer.</text>
</comment>
<comment type="subcellular location">
    <subcellularLocation>
        <location evidence="1">Cytoplasm</location>
    </subcellularLocation>
</comment>
<comment type="similarity">
    <text evidence="1">Belongs to the GrpE family.</text>
</comment>
<sequence length="203" mass="23181">MSSKEQNVHEEQVSKEKEGMESVMNESQEQVKSEDAQAEFDAQAELVQALARVDELEKQLQQSQKTEREAMIRAQAEIENIRRRTQQDVEKAHKFALEKFSNELLPVLDNLERALSAADHENEQMQPMIEGLELTLKSFLDAVRKFGIEVVEEKNVAFNPEVHQAMTLIDSPEHEANHVVDVMQKGYTLNGRLLRPAMVVVSK</sequence>
<reference key="1">
    <citation type="journal article" date="2008" name="J. Bacteriol.">
        <title>Complete genome sequence of uropathogenic Proteus mirabilis, a master of both adherence and motility.</title>
        <authorList>
            <person name="Pearson M.M."/>
            <person name="Sebaihia M."/>
            <person name="Churcher C."/>
            <person name="Quail M.A."/>
            <person name="Seshasayee A.S."/>
            <person name="Luscombe N.M."/>
            <person name="Abdellah Z."/>
            <person name="Arrosmith C."/>
            <person name="Atkin B."/>
            <person name="Chillingworth T."/>
            <person name="Hauser H."/>
            <person name="Jagels K."/>
            <person name="Moule S."/>
            <person name="Mungall K."/>
            <person name="Norbertczak H."/>
            <person name="Rabbinowitsch E."/>
            <person name="Walker D."/>
            <person name="Whithead S."/>
            <person name="Thomson N.R."/>
            <person name="Rather P.N."/>
            <person name="Parkhill J."/>
            <person name="Mobley H.L.T."/>
        </authorList>
    </citation>
    <scope>NUCLEOTIDE SEQUENCE [LARGE SCALE GENOMIC DNA]</scope>
    <source>
        <strain>HI4320</strain>
    </source>
</reference>
<dbReference type="EMBL" id="AM942759">
    <property type="protein sequence ID" value="CAR43943.1"/>
    <property type="molecule type" value="Genomic_DNA"/>
</dbReference>
<dbReference type="RefSeq" id="WP_012368144.1">
    <property type="nucleotide sequence ID" value="NC_010554.1"/>
</dbReference>
<dbReference type="SMR" id="B4F059"/>
<dbReference type="EnsemblBacteria" id="CAR43943">
    <property type="protein sequence ID" value="CAR43943"/>
    <property type="gene ID" value="PMI1900"/>
</dbReference>
<dbReference type="GeneID" id="6803580"/>
<dbReference type="KEGG" id="pmr:PMI1900"/>
<dbReference type="PATRIC" id="fig|529507.6.peg.1852"/>
<dbReference type="eggNOG" id="COG0576">
    <property type="taxonomic scope" value="Bacteria"/>
</dbReference>
<dbReference type="HOGENOM" id="CLU_057217_6_0_6"/>
<dbReference type="Proteomes" id="UP000008319">
    <property type="component" value="Chromosome"/>
</dbReference>
<dbReference type="GO" id="GO:0005829">
    <property type="term" value="C:cytosol"/>
    <property type="evidence" value="ECO:0007669"/>
    <property type="project" value="TreeGrafter"/>
</dbReference>
<dbReference type="GO" id="GO:0000774">
    <property type="term" value="F:adenyl-nucleotide exchange factor activity"/>
    <property type="evidence" value="ECO:0007669"/>
    <property type="project" value="InterPro"/>
</dbReference>
<dbReference type="GO" id="GO:0042803">
    <property type="term" value="F:protein homodimerization activity"/>
    <property type="evidence" value="ECO:0007669"/>
    <property type="project" value="InterPro"/>
</dbReference>
<dbReference type="GO" id="GO:0051087">
    <property type="term" value="F:protein-folding chaperone binding"/>
    <property type="evidence" value="ECO:0007669"/>
    <property type="project" value="InterPro"/>
</dbReference>
<dbReference type="GO" id="GO:0051082">
    <property type="term" value="F:unfolded protein binding"/>
    <property type="evidence" value="ECO:0007669"/>
    <property type="project" value="TreeGrafter"/>
</dbReference>
<dbReference type="GO" id="GO:0006457">
    <property type="term" value="P:protein folding"/>
    <property type="evidence" value="ECO:0007669"/>
    <property type="project" value="InterPro"/>
</dbReference>
<dbReference type="CDD" id="cd00446">
    <property type="entry name" value="GrpE"/>
    <property type="match status" value="1"/>
</dbReference>
<dbReference type="FunFam" id="2.30.22.10:FF:000001">
    <property type="entry name" value="Protein GrpE"/>
    <property type="match status" value="1"/>
</dbReference>
<dbReference type="Gene3D" id="3.90.20.20">
    <property type="match status" value="1"/>
</dbReference>
<dbReference type="Gene3D" id="2.30.22.10">
    <property type="entry name" value="Head domain of nucleotide exchange factor GrpE"/>
    <property type="match status" value="1"/>
</dbReference>
<dbReference type="HAMAP" id="MF_01151">
    <property type="entry name" value="GrpE"/>
    <property type="match status" value="1"/>
</dbReference>
<dbReference type="InterPro" id="IPR000740">
    <property type="entry name" value="GrpE"/>
</dbReference>
<dbReference type="InterPro" id="IPR013805">
    <property type="entry name" value="GrpE_coiled_coil"/>
</dbReference>
<dbReference type="InterPro" id="IPR009012">
    <property type="entry name" value="GrpE_head"/>
</dbReference>
<dbReference type="NCBIfam" id="NF010738">
    <property type="entry name" value="PRK14140.1"/>
    <property type="match status" value="1"/>
</dbReference>
<dbReference type="NCBIfam" id="NF010748">
    <property type="entry name" value="PRK14150.1"/>
    <property type="match status" value="1"/>
</dbReference>
<dbReference type="PANTHER" id="PTHR21237">
    <property type="entry name" value="GRPE PROTEIN"/>
    <property type="match status" value="1"/>
</dbReference>
<dbReference type="PANTHER" id="PTHR21237:SF23">
    <property type="entry name" value="GRPE PROTEIN HOMOLOG, MITOCHONDRIAL"/>
    <property type="match status" value="1"/>
</dbReference>
<dbReference type="Pfam" id="PF01025">
    <property type="entry name" value="GrpE"/>
    <property type="match status" value="1"/>
</dbReference>
<dbReference type="PRINTS" id="PR00773">
    <property type="entry name" value="GRPEPROTEIN"/>
</dbReference>
<dbReference type="SUPFAM" id="SSF58014">
    <property type="entry name" value="Coiled-coil domain of nucleotide exchange factor GrpE"/>
    <property type="match status" value="1"/>
</dbReference>
<dbReference type="SUPFAM" id="SSF51064">
    <property type="entry name" value="Head domain of nucleotide exchange factor GrpE"/>
    <property type="match status" value="1"/>
</dbReference>
<dbReference type="PROSITE" id="PS01071">
    <property type="entry name" value="GRPE"/>
    <property type="match status" value="1"/>
</dbReference>
<gene>
    <name evidence="1" type="primary">grpE</name>
    <name type="ordered locus">PMI1900</name>
</gene>
<evidence type="ECO:0000255" key="1">
    <source>
        <dbReference type="HAMAP-Rule" id="MF_01151"/>
    </source>
</evidence>
<evidence type="ECO:0000256" key="2">
    <source>
        <dbReference type="SAM" id="MobiDB-lite"/>
    </source>
</evidence>
<name>GRPE_PROMH</name>
<accession>B4F059</accession>
<keyword id="KW-0143">Chaperone</keyword>
<keyword id="KW-0963">Cytoplasm</keyword>
<keyword id="KW-1185">Reference proteome</keyword>
<keyword id="KW-0346">Stress response</keyword>